<organism>
    <name type="scientific">Prochlorococcus marinus (strain MIT 9303)</name>
    <dbReference type="NCBI Taxonomy" id="59922"/>
    <lineage>
        <taxon>Bacteria</taxon>
        <taxon>Bacillati</taxon>
        <taxon>Cyanobacteriota</taxon>
        <taxon>Cyanophyceae</taxon>
        <taxon>Synechococcales</taxon>
        <taxon>Prochlorococcaceae</taxon>
        <taxon>Prochlorococcus</taxon>
    </lineage>
</organism>
<sequence>MTAATSSANGAWEAVIGLETHVQLGTNSKIFTCASTTFGDDPNTHIDPVVCGLPGTLPVLNQMVLEYAVKAAMALNLNIAEHSKFDRKQYFYPDLPKNYQISQFDEPIAEEGWIEVEVAEKGKDTYLKRIGIERLHMEEDAGKLVHAGSDRLAGSTHSLVDYNRAGVALAEIVSKPDLRTGREAAEYASEIRRIMRYLGVSDGNMQEGSLRCDVNISVRQGADAPFGTKVEIKNMNSFSAIQKACEYEIQRQIKAYEAGEAVVQETRLWDEGKQLTKSMRSKEGSSDYRYFPDPDLGPIEVIASVREGWRTELPELPSAKRHRYAEEFGLSVYDARVLTDEYAMAEYFEAAVAAGAEAKGVANWIQGDIAAYVNANRLSYSTLPFRPEQLAEMVQLIDGGKISGKIAKEILPELLEKGGSAKAIVDQRGLGMISDPAAITTIVEELLAAHPQEVEAFRGGKTKLQGFFVGQLMKKTGGKADPKLANQILSQKLKGG</sequence>
<feature type="chain" id="PRO_1000016017" description="Aspartyl/glutamyl-tRNA(Asn/Gln) amidotransferase subunit B">
    <location>
        <begin position="1"/>
        <end position="496"/>
    </location>
</feature>
<reference key="1">
    <citation type="journal article" date="2007" name="PLoS Genet.">
        <title>Patterns and implications of gene gain and loss in the evolution of Prochlorococcus.</title>
        <authorList>
            <person name="Kettler G.C."/>
            <person name="Martiny A.C."/>
            <person name="Huang K."/>
            <person name="Zucker J."/>
            <person name="Coleman M.L."/>
            <person name="Rodrigue S."/>
            <person name="Chen F."/>
            <person name="Lapidus A."/>
            <person name="Ferriera S."/>
            <person name="Johnson J."/>
            <person name="Steglich C."/>
            <person name="Church G.M."/>
            <person name="Richardson P."/>
            <person name="Chisholm S.W."/>
        </authorList>
    </citation>
    <scope>NUCLEOTIDE SEQUENCE [LARGE SCALE GENOMIC DNA]</scope>
    <source>
        <strain>MIT 9303</strain>
    </source>
</reference>
<accession>A2CDJ8</accession>
<name>GATB_PROM3</name>
<comment type="function">
    <text evidence="1">Allows the formation of correctly charged Asn-tRNA(Asn) or Gln-tRNA(Gln) through the transamidation of misacylated Asp-tRNA(Asn) or Glu-tRNA(Gln) in organisms which lack either or both of asparaginyl-tRNA or glutaminyl-tRNA synthetases. The reaction takes place in the presence of glutamine and ATP through an activated phospho-Asp-tRNA(Asn) or phospho-Glu-tRNA(Gln).</text>
</comment>
<comment type="catalytic activity">
    <reaction evidence="1">
        <text>L-glutamyl-tRNA(Gln) + L-glutamine + ATP + H2O = L-glutaminyl-tRNA(Gln) + L-glutamate + ADP + phosphate + H(+)</text>
        <dbReference type="Rhea" id="RHEA:17521"/>
        <dbReference type="Rhea" id="RHEA-COMP:9681"/>
        <dbReference type="Rhea" id="RHEA-COMP:9684"/>
        <dbReference type="ChEBI" id="CHEBI:15377"/>
        <dbReference type="ChEBI" id="CHEBI:15378"/>
        <dbReference type="ChEBI" id="CHEBI:29985"/>
        <dbReference type="ChEBI" id="CHEBI:30616"/>
        <dbReference type="ChEBI" id="CHEBI:43474"/>
        <dbReference type="ChEBI" id="CHEBI:58359"/>
        <dbReference type="ChEBI" id="CHEBI:78520"/>
        <dbReference type="ChEBI" id="CHEBI:78521"/>
        <dbReference type="ChEBI" id="CHEBI:456216"/>
    </reaction>
</comment>
<comment type="catalytic activity">
    <reaction evidence="1">
        <text>L-aspartyl-tRNA(Asn) + L-glutamine + ATP + H2O = L-asparaginyl-tRNA(Asn) + L-glutamate + ADP + phosphate + 2 H(+)</text>
        <dbReference type="Rhea" id="RHEA:14513"/>
        <dbReference type="Rhea" id="RHEA-COMP:9674"/>
        <dbReference type="Rhea" id="RHEA-COMP:9677"/>
        <dbReference type="ChEBI" id="CHEBI:15377"/>
        <dbReference type="ChEBI" id="CHEBI:15378"/>
        <dbReference type="ChEBI" id="CHEBI:29985"/>
        <dbReference type="ChEBI" id="CHEBI:30616"/>
        <dbReference type="ChEBI" id="CHEBI:43474"/>
        <dbReference type="ChEBI" id="CHEBI:58359"/>
        <dbReference type="ChEBI" id="CHEBI:78515"/>
        <dbReference type="ChEBI" id="CHEBI:78516"/>
        <dbReference type="ChEBI" id="CHEBI:456216"/>
    </reaction>
</comment>
<comment type="subunit">
    <text evidence="1">Heterotrimer of A, B and C subunits.</text>
</comment>
<comment type="similarity">
    <text evidence="1">Belongs to the GatB/GatE family. GatB subfamily.</text>
</comment>
<evidence type="ECO:0000255" key="1">
    <source>
        <dbReference type="HAMAP-Rule" id="MF_00121"/>
    </source>
</evidence>
<keyword id="KW-0067">ATP-binding</keyword>
<keyword id="KW-0436">Ligase</keyword>
<keyword id="KW-0547">Nucleotide-binding</keyword>
<keyword id="KW-0648">Protein biosynthesis</keyword>
<gene>
    <name evidence="1" type="primary">gatB</name>
    <name type="ordered locus">P9303_28281</name>
</gene>
<protein>
    <recommendedName>
        <fullName evidence="1">Aspartyl/glutamyl-tRNA(Asn/Gln) amidotransferase subunit B</fullName>
        <shortName evidence="1">Asp/Glu-ADT subunit B</shortName>
        <ecNumber evidence="1">6.3.5.-</ecNumber>
    </recommendedName>
</protein>
<proteinExistence type="inferred from homology"/>
<dbReference type="EC" id="6.3.5.-" evidence="1"/>
<dbReference type="EMBL" id="CP000554">
    <property type="protein sequence ID" value="ABM79558.1"/>
    <property type="molecule type" value="Genomic_DNA"/>
</dbReference>
<dbReference type="RefSeq" id="WP_011827400.1">
    <property type="nucleotide sequence ID" value="NC_008820.1"/>
</dbReference>
<dbReference type="SMR" id="A2CDJ8"/>
<dbReference type="STRING" id="59922.P9303_28281"/>
<dbReference type="KEGG" id="pmf:P9303_28281"/>
<dbReference type="HOGENOM" id="CLU_019240_0_0_3"/>
<dbReference type="BioCyc" id="PMAR59922:G1G80-2483-MONOMER"/>
<dbReference type="Proteomes" id="UP000002274">
    <property type="component" value="Chromosome"/>
</dbReference>
<dbReference type="GO" id="GO:0050566">
    <property type="term" value="F:asparaginyl-tRNA synthase (glutamine-hydrolyzing) activity"/>
    <property type="evidence" value="ECO:0007669"/>
    <property type="project" value="RHEA"/>
</dbReference>
<dbReference type="GO" id="GO:0005524">
    <property type="term" value="F:ATP binding"/>
    <property type="evidence" value="ECO:0007669"/>
    <property type="project" value="UniProtKB-KW"/>
</dbReference>
<dbReference type="GO" id="GO:0050567">
    <property type="term" value="F:glutaminyl-tRNA synthase (glutamine-hydrolyzing) activity"/>
    <property type="evidence" value="ECO:0007669"/>
    <property type="project" value="UniProtKB-UniRule"/>
</dbReference>
<dbReference type="GO" id="GO:0070681">
    <property type="term" value="P:glutaminyl-tRNAGln biosynthesis via transamidation"/>
    <property type="evidence" value="ECO:0007669"/>
    <property type="project" value="TreeGrafter"/>
</dbReference>
<dbReference type="GO" id="GO:0006412">
    <property type="term" value="P:translation"/>
    <property type="evidence" value="ECO:0007669"/>
    <property type="project" value="UniProtKB-UniRule"/>
</dbReference>
<dbReference type="FunFam" id="1.10.10.410:FF:000001">
    <property type="entry name" value="Aspartyl/glutamyl-tRNA(Asn/Gln) amidotransferase subunit B"/>
    <property type="match status" value="1"/>
</dbReference>
<dbReference type="FunFam" id="1.10.150.380:FF:000001">
    <property type="entry name" value="Aspartyl/glutamyl-tRNA(Asn/Gln) amidotransferase subunit B"/>
    <property type="match status" value="1"/>
</dbReference>
<dbReference type="Gene3D" id="1.10.10.410">
    <property type="match status" value="1"/>
</dbReference>
<dbReference type="Gene3D" id="1.10.150.380">
    <property type="entry name" value="GatB domain, N-terminal subdomain"/>
    <property type="match status" value="1"/>
</dbReference>
<dbReference type="HAMAP" id="MF_00121">
    <property type="entry name" value="GatB"/>
    <property type="match status" value="1"/>
</dbReference>
<dbReference type="InterPro" id="IPR017959">
    <property type="entry name" value="Asn/Gln-tRNA_amidoTrfase_suB/E"/>
</dbReference>
<dbReference type="InterPro" id="IPR006075">
    <property type="entry name" value="Asn/Gln-tRNA_Trfase_suB/E_cat"/>
</dbReference>
<dbReference type="InterPro" id="IPR018027">
    <property type="entry name" value="Asn/Gln_amidotransferase"/>
</dbReference>
<dbReference type="InterPro" id="IPR003789">
    <property type="entry name" value="Asn/Gln_tRNA_amidoTrase-B-like"/>
</dbReference>
<dbReference type="InterPro" id="IPR004413">
    <property type="entry name" value="GatB"/>
</dbReference>
<dbReference type="InterPro" id="IPR042114">
    <property type="entry name" value="GatB_C_1"/>
</dbReference>
<dbReference type="InterPro" id="IPR023168">
    <property type="entry name" value="GatB_Yqey_C_2"/>
</dbReference>
<dbReference type="InterPro" id="IPR017958">
    <property type="entry name" value="Gln-tRNA_amidoTrfase_suB_CS"/>
</dbReference>
<dbReference type="InterPro" id="IPR014746">
    <property type="entry name" value="Gln_synth/guanido_kin_cat_dom"/>
</dbReference>
<dbReference type="NCBIfam" id="TIGR00133">
    <property type="entry name" value="gatB"/>
    <property type="match status" value="1"/>
</dbReference>
<dbReference type="NCBIfam" id="NF004012">
    <property type="entry name" value="PRK05477.1-2"/>
    <property type="match status" value="1"/>
</dbReference>
<dbReference type="NCBIfam" id="NF004014">
    <property type="entry name" value="PRK05477.1-4"/>
    <property type="match status" value="1"/>
</dbReference>
<dbReference type="PANTHER" id="PTHR11659">
    <property type="entry name" value="GLUTAMYL-TRNA GLN AMIDOTRANSFERASE SUBUNIT B MITOCHONDRIAL AND PROKARYOTIC PET112-RELATED"/>
    <property type="match status" value="1"/>
</dbReference>
<dbReference type="PANTHER" id="PTHR11659:SF0">
    <property type="entry name" value="GLUTAMYL-TRNA(GLN) AMIDOTRANSFERASE SUBUNIT B, MITOCHONDRIAL"/>
    <property type="match status" value="1"/>
</dbReference>
<dbReference type="Pfam" id="PF02934">
    <property type="entry name" value="GatB_N"/>
    <property type="match status" value="1"/>
</dbReference>
<dbReference type="Pfam" id="PF02637">
    <property type="entry name" value="GatB_Yqey"/>
    <property type="match status" value="1"/>
</dbReference>
<dbReference type="SMART" id="SM00845">
    <property type="entry name" value="GatB_Yqey"/>
    <property type="match status" value="1"/>
</dbReference>
<dbReference type="SUPFAM" id="SSF89095">
    <property type="entry name" value="GatB/YqeY motif"/>
    <property type="match status" value="1"/>
</dbReference>
<dbReference type="SUPFAM" id="SSF55931">
    <property type="entry name" value="Glutamine synthetase/guanido kinase"/>
    <property type="match status" value="1"/>
</dbReference>
<dbReference type="PROSITE" id="PS01234">
    <property type="entry name" value="GATB"/>
    <property type="match status" value="1"/>
</dbReference>